<gene>
    <name evidence="1" type="primary">rpsK</name>
    <name type="ordered locus">MS53_0575</name>
</gene>
<dbReference type="EMBL" id="AE017245">
    <property type="protein sequence ID" value="AAZ43982.1"/>
    <property type="molecule type" value="Genomic_DNA"/>
</dbReference>
<dbReference type="RefSeq" id="WP_011283711.1">
    <property type="nucleotide sequence ID" value="NC_007294.1"/>
</dbReference>
<dbReference type="SMR" id="Q4A5I9"/>
<dbReference type="STRING" id="262723.MS53_0575"/>
<dbReference type="KEGG" id="msy:MS53_0575"/>
<dbReference type="eggNOG" id="COG0100">
    <property type="taxonomic scope" value="Bacteria"/>
</dbReference>
<dbReference type="HOGENOM" id="CLU_072439_5_0_14"/>
<dbReference type="OrthoDB" id="9806415at2"/>
<dbReference type="Proteomes" id="UP000000549">
    <property type="component" value="Chromosome"/>
</dbReference>
<dbReference type="GO" id="GO:1990904">
    <property type="term" value="C:ribonucleoprotein complex"/>
    <property type="evidence" value="ECO:0007669"/>
    <property type="project" value="UniProtKB-KW"/>
</dbReference>
<dbReference type="GO" id="GO:0005840">
    <property type="term" value="C:ribosome"/>
    <property type="evidence" value="ECO:0007669"/>
    <property type="project" value="UniProtKB-KW"/>
</dbReference>
<dbReference type="GO" id="GO:0019843">
    <property type="term" value="F:rRNA binding"/>
    <property type="evidence" value="ECO:0007669"/>
    <property type="project" value="UniProtKB-UniRule"/>
</dbReference>
<dbReference type="GO" id="GO:0003735">
    <property type="term" value="F:structural constituent of ribosome"/>
    <property type="evidence" value="ECO:0007669"/>
    <property type="project" value="InterPro"/>
</dbReference>
<dbReference type="GO" id="GO:0006412">
    <property type="term" value="P:translation"/>
    <property type="evidence" value="ECO:0007669"/>
    <property type="project" value="UniProtKB-UniRule"/>
</dbReference>
<dbReference type="Gene3D" id="3.30.420.80">
    <property type="entry name" value="Ribosomal protein S11"/>
    <property type="match status" value="1"/>
</dbReference>
<dbReference type="HAMAP" id="MF_01310">
    <property type="entry name" value="Ribosomal_uS11"/>
    <property type="match status" value="1"/>
</dbReference>
<dbReference type="InterPro" id="IPR001971">
    <property type="entry name" value="Ribosomal_uS11"/>
</dbReference>
<dbReference type="InterPro" id="IPR019981">
    <property type="entry name" value="Ribosomal_uS11_bac-type"/>
</dbReference>
<dbReference type="InterPro" id="IPR018102">
    <property type="entry name" value="Ribosomal_uS11_CS"/>
</dbReference>
<dbReference type="InterPro" id="IPR036967">
    <property type="entry name" value="Ribosomal_uS11_sf"/>
</dbReference>
<dbReference type="NCBIfam" id="NF003698">
    <property type="entry name" value="PRK05309.1"/>
    <property type="match status" value="1"/>
</dbReference>
<dbReference type="NCBIfam" id="TIGR03632">
    <property type="entry name" value="uS11_bact"/>
    <property type="match status" value="1"/>
</dbReference>
<dbReference type="PANTHER" id="PTHR11759">
    <property type="entry name" value="40S RIBOSOMAL PROTEIN S14/30S RIBOSOMAL PROTEIN S11"/>
    <property type="match status" value="1"/>
</dbReference>
<dbReference type="Pfam" id="PF00411">
    <property type="entry name" value="Ribosomal_S11"/>
    <property type="match status" value="1"/>
</dbReference>
<dbReference type="PIRSF" id="PIRSF002131">
    <property type="entry name" value="Ribosomal_S11"/>
    <property type="match status" value="1"/>
</dbReference>
<dbReference type="SUPFAM" id="SSF53137">
    <property type="entry name" value="Translational machinery components"/>
    <property type="match status" value="1"/>
</dbReference>
<dbReference type="PROSITE" id="PS00054">
    <property type="entry name" value="RIBOSOMAL_S11"/>
    <property type="match status" value="1"/>
</dbReference>
<name>RS11_MYCS5</name>
<proteinExistence type="inferred from homology"/>
<evidence type="ECO:0000255" key="1">
    <source>
        <dbReference type="HAMAP-Rule" id="MF_01310"/>
    </source>
</evidence>
<evidence type="ECO:0000256" key="2">
    <source>
        <dbReference type="SAM" id="MobiDB-lite"/>
    </source>
</evidence>
<evidence type="ECO:0000305" key="3"/>
<keyword id="KW-1185">Reference proteome</keyword>
<keyword id="KW-0687">Ribonucleoprotein</keyword>
<keyword id="KW-0689">Ribosomal protein</keyword>
<keyword id="KW-0694">RNA-binding</keyword>
<keyword id="KW-0699">rRNA-binding</keyword>
<comment type="function">
    <text evidence="1">Located on the platform of the 30S subunit, it bridges several disparate RNA helices of the 16S rRNA. Forms part of the Shine-Dalgarno cleft in the 70S ribosome.</text>
</comment>
<comment type="subunit">
    <text evidence="1">Part of the 30S ribosomal subunit. Interacts with proteins S7 and S18. Binds to IF-3.</text>
</comment>
<comment type="similarity">
    <text evidence="1">Belongs to the universal ribosomal protein uS11 family.</text>
</comment>
<reference key="1">
    <citation type="journal article" date="2005" name="J. Bacteriol.">
        <title>Swine and poultry pathogens: the complete genome sequences of two strains of Mycoplasma hyopneumoniae and a strain of Mycoplasma synoviae.</title>
        <authorList>
            <person name="Vasconcelos A.T.R."/>
            <person name="Ferreira H.B."/>
            <person name="Bizarro C.V."/>
            <person name="Bonatto S.L."/>
            <person name="Carvalho M.O."/>
            <person name="Pinto P.M."/>
            <person name="Almeida D.F."/>
            <person name="Almeida L.G.P."/>
            <person name="Almeida R."/>
            <person name="Alves-Junior L."/>
            <person name="Assuncao E.N."/>
            <person name="Azevedo V.A.C."/>
            <person name="Bogo M.R."/>
            <person name="Brigido M.M."/>
            <person name="Brocchi M."/>
            <person name="Burity H.A."/>
            <person name="Camargo A.A."/>
            <person name="Camargo S.S."/>
            <person name="Carepo M.S."/>
            <person name="Carraro D.M."/>
            <person name="de Mattos Cascardo J.C."/>
            <person name="Castro L.A."/>
            <person name="Cavalcanti G."/>
            <person name="Chemale G."/>
            <person name="Collevatti R.G."/>
            <person name="Cunha C.W."/>
            <person name="Dallagiovanna B."/>
            <person name="Dambros B.P."/>
            <person name="Dellagostin O.A."/>
            <person name="Falcao C."/>
            <person name="Fantinatti-Garboggini F."/>
            <person name="Felipe M.S.S."/>
            <person name="Fiorentin L."/>
            <person name="Franco G.R."/>
            <person name="Freitas N.S.A."/>
            <person name="Frias D."/>
            <person name="Grangeiro T.B."/>
            <person name="Grisard E.C."/>
            <person name="Guimaraes C.T."/>
            <person name="Hungria M."/>
            <person name="Jardim S.N."/>
            <person name="Krieger M.A."/>
            <person name="Laurino J.P."/>
            <person name="Lima L.F.A."/>
            <person name="Lopes M.I."/>
            <person name="Loreto E.L.S."/>
            <person name="Madeira H.M.F."/>
            <person name="Manfio G.P."/>
            <person name="Maranhao A.Q."/>
            <person name="Martinkovics C.T."/>
            <person name="Medeiros S.R.B."/>
            <person name="Moreira M.A.M."/>
            <person name="Neiva M."/>
            <person name="Ramalho-Neto C.E."/>
            <person name="Nicolas M.F."/>
            <person name="Oliveira S.C."/>
            <person name="Paixao R.F.C."/>
            <person name="Pedrosa F.O."/>
            <person name="Pena S.D.J."/>
            <person name="Pereira M."/>
            <person name="Pereira-Ferrari L."/>
            <person name="Piffer I."/>
            <person name="Pinto L.S."/>
            <person name="Potrich D.P."/>
            <person name="Salim A.C.M."/>
            <person name="Santos F.R."/>
            <person name="Schmitt R."/>
            <person name="Schneider M.P.C."/>
            <person name="Schrank A."/>
            <person name="Schrank I.S."/>
            <person name="Schuck A.F."/>
            <person name="Seuanez H.N."/>
            <person name="Silva D.W."/>
            <person name="Silva R."/>
            <person name="Silva S.C."/>
            <person name="Soares C.M.A."/>
            <person name="Souza K.R.L."/>
            <person name="Souza R.C."/>
            <person name="Staats C.C."/>
            <person name="Steffens M.B.R."/>
            <person name="Teixeira S.M.R."/>
            <person name="Urmenyi T.P."/>
            <person name="Vainstein M.H."/>
            <person name="Zuccherato L.W."/>
            <person name="Simpson A.J.G."/>
            <person name="Zaha A."/>
        </authorList>
    </citation>
    <scope>NUCLEOTIDE SEQUENCE [LARGE SCALE GENOMIC DNA]</scope>
    <source>
        <strain>53</strain>
    </source>
</reference>
<protein>
    <recommendedName>
        <fullName evidence="1">Small ribosomal subunit protein uS11</fullName>
    </recommendedName>
    <alternativeName>
        <fullName evidence="3">30S ribosomal protein S11</fullName>
    </alternativeName>
</protein>
<feature type="chain" id="PRO_0000294806" description="Small ribosomal subunit protein uS11">
    <location>
        <begin position="1"/>
        <end position="129"/>
    </location>
</feature>
<feature type="region of interest" description="Disordered" evidence="2">
    <location>
        <begin position="108"/>
        <end position="129"/>
    </location>
</feature>
<feature type="compositionally biased region" description="Basic residues" evidence="2">
    <location>
        <begin position="117"/>
        <end position="129"/>
    </location>
</feature>
<accession>Q4A5I9</accession>
<organism>
    <name type="scientific">Mycoplasmopsis synoviae (strain 53)</name>
    <name type="common">Mycoplasma synoviae</name>
    <dbReference type="NCBI Taxonomy" id="262723"/>
    <lineage>
        <taxon>Bacteria</taxon>
        <taxon>Bacillati</taxon>
        <taxon>Mycoplasmatota</taxon>
        <taxon>Mycoplasmoidales</taxon>
        <taxon>Metamycoplasmataceae</taxon>
        <taxon>Mycoplasmopsis</taxon>
    </lineage>
</organism>
<sequence>MARKAKKKNISSGVAHIHSSNQNTIITFTDEKGNVIAWSSSGKVGFKGTKKKTSFAASEAAKDAAQMAKEHGISQVRVEMKGLGSGKDSARKQIEVWGIKVTEIKDVTPIPHNGTRPPKRVLKRLRLKK</sequence>